<reference key="1">
    <citation type="journal article" date="2003" name="Lancet">
        <title>Genome sequence of Vibrio parahaemolyticus: a pathogenic mechanism distinct from that of V. cholerae.</title>
        <authorList>
            <person name="Makino K."/>
            <person name="Oshima K."/>
            <person name="Kurokawa K."/>
            <person name="Yokoyama K."/>
            <person name="Uda T."/>
            <person name="Tagomori K."/>
            <person name="Iijima Y."/>
            <person name="Najima M."/>
            <person name="Nakano M."/>
            <person name="Yamashita A."/>
            <person name="Kubota Y."/>
            <person name="Kimura S."/>
            <person name="Yasunaga T."/>
            <person name="Honda T."/>
            <person name="Shinagawa H."/>
            <person name="Hattori M."/>
            <person name="Iida T."/>
        </authorList>
    </citation>
    <scope>NUCLEOTIDE SEQUENCE [LARGE SCALE GENOMIC DNA]</scope>
    <source>
        <strain>RIMD 2210633</strain>
    </source>
</reference>
<proteinExistence type="inferred from homology"/>
<name>QUEA_VIBPA</name>
<gene>
    <name evidence="1" type="primary">queA</name>
    <name type="ordered locus">VP0587</name>
</gene>
<keyword id="KW-0963">Cytoplasm</keyword>
<keyword id="KW-0671">Queuosine biosynthesis</keyword>
<keyword id="KW-0949">S-adenosyl-L-methionine</keyword>
<keyword id="KW-0808">Transferase</keyword>
<accession>Q87S37</accession>
<protein>
    <recommendedName>
        <fullName evidence="1">S-adenosylmethionine:tRNA ribosyltransferase-isomerase</fullName>
        <ecNumber evidence="1">2.4.99.17</ecNumber>
    </recommendedName>
    <alternativeName>
        <fullName evidence="1">Queuosine biosynthesis protein QueA</fullName>
    </alternativeName>
</protein>
<sequence length="350" mass="39129">MQVSDFHFDLPDELIARYPQPERTASRLLQMDGNTGELIDGTFTDVLNQVQAGDLVVFNNTRVIPARMFGRKESGGKLEVLVERMLDEKSILAHVRCSKSPKPGTTIIVGENDEYSAEMVARHDALFELKFNSDKTVLDILEEIGHMPLPPYIDRPDEDADKERYQTVYNQKPGAVAAPTAGLHFDDVLLDKIKAKGAEFAYVTLHVGAGTFQPVKVDNINDHHMHAEYVEVPQEVVDAINATKARGGRIIAVGTTSVRSLESAAQDALKKGTELVPFFGDTEIFIYPGYEYQLVDCLITNFHLPESTLIMLVSAFAGYENTMNAYKHAVENKYRFFSYGDSMFIKKKTI</sequence>
<feature type="chain" id="PRO_0000165461" description="S-adenosylmethionine:tRNA ribosyltransferase-isomerase">
    <location>
        <begin position="1"/>
        <end position="350"/>
    </location>
</feature>
<dbReference type="EC" id="2.4.99.17" evidence="1"/>
<dbReference type="EMBL" id="BA000031">
    <property type="protein sequence ID" value="BAC58850.1"/>
    <property type="molecule type" value="Genomic_DNA"/>
</dbReference>
<dbReference type="RefSeq" id="NP_796966.1">
    <property type="nucleotide sequence ID" value="NC_004603.1"/>
</dbReference>
<dbReference type="RefSeq" id="WP_005482995.1">
    <property type="nucleotide sequence ID" value="NC_004603.1"/>
</dbReference>
<dbReference type="SMR" id="Q87S37"/>
<dbReference type="GeneID" id="1188062"/>
<dbReference type="KEGG" id="vpa:VP0587"/>
<dbReference type="PATRIC" id="fig|223926.6.peg.557"/>
<dbReference type="eggNOG" id="COG0809">
    <property type="taxonomic scope" value="Bacteria"/>
</dbReference>
<dbReference type="HOGENOM" id="CLU_039110_1_0_6"/>
<dbReference type="UniPathway" id="UPA00392"/>
<dbReference type="Proteomes" id="UP000002493">
    <property type="component" value="Chromosome 1"/>
</dbReference>
<dbReference type="GO" id="GO:0005737">
    <property type="term" value="C:cytoplasm"/>
    <property type="evidence" value="ECO:0007669"/>
    <property type="project" value="UniProtKB-SubCell"/>
</dbReference>
<dbReference type="GO" id="GO:0051075">
    <property type="term" value="F:S-adenosylmethionine:tRNA ribosyltransferase-isomerase activity"/>
    <property type="evidence" value="ECO:0007669"/>
    <property type="project" value="UniProtKB-EC"/>
</dbReference>
<dbReference type="GO" id="GO:0008616">
    <property type="term" value="P:queuosine biosynthetic process"/>
    <property type="evidence" value="ECO:0007669"/>
    <property type="project" value="UniProtKB-UniRule"/>
</dbReference>
<dbReference type="GO" id="GO:0002099">
    <property type="term" value="P:tRNA wobble guanine modification"/>
    <property type="evidence" value="ECO:0007669"/>
    <property type="project" value="TreeGrafter"/>
</dbReference>
<dbReference type="FunFam" id="2.40.10.240:FF:000001">
    <property type="entry name" value="S-adenosylmethionine:tRNA ribosyltransferase-isomerase"/>
    <property type="match status" value="1"/>
</dbReference>
<dbReference type="FunFam" id="3.40.1780.10:FF:000001">
    <property type="entry name" value="S-adenosylmethionine:tRNA ribosyltransferase-isomerase"/>
    <property type="match status" value="1"/>
</dbReference>
<dbReference type="Gene3D" id="2.40.10.240">
    <property type="entry name" value="QueA-like"/>
    <property type="match status" value="1"/>
</dbReference>
<dbReference type="Gene3D" id="3.40.1780.10">
    <property type="entry name" value="QueA-like"/>
    <property type="match status" value="1"/>
</dbReference>
<dbReference type="HAMAP" id="MF_00113">
    <property type="entry name" value="QueA"/>
    <property type="match status" value="1"/>
</dbReference>
<dbReference type="InterPro" id="IPR003699">
    <property type="entry name" value="QueA"/>
</dbReference>
<dbReference type="InterPro" id="IPR042118">
    <property type="entry name" value="QueA_dom1"/>
</dbReference>
<dbReference type="InterPro" id="IPR042119">
    <property type="entry name" value="QueA_dom2"/>
</dbReference>
<dbReference type="InterPro" id="IPR036100">
    <property type="entry name" value="QueA_sf"/>
</dbReference>
<dbReference type="NCBIfam" id="NF001140">
    <property type="entry name" value="PRK00147.1"/>
    <property type="match status" value="1"/>
</dbReference>
<dbReference type="NCBIfam" id="TIGR00113">
    <property type="entry name" value="queA"/>
    <property type="match status" value="1"/>
</dbReference>
<dbReference type="PANTHER" id="PTHR30307">
    <property type="entry name" value="S-ADENOSYLMETHIONINE:TRNA RIBOSYLTRANSFERASE-ISOMERASE"/>
    <property type="match status" value="1"/>
</dbReference>
<dbReference type="PANTHER" id="PTHR30307:SF0">
    <property type="entry name" value="S-ADENOSYLMETHIONINE:TRNA RIBOSYLTRANSFERASE-ISOMERASE"/>
    <property type="match status" value="1"/>
</dbReference>
<dbReference type="Pfam" id="PF02547">
    <property type="entry name" value="Queuosine_synth"/>
    <property type="match status" value="1"/>
</dbReference>
<dbReference type="SUPFAM" id="SSF111337">
    <property type="entry name" value="QueA-like"/>
    <property type="match status" value="1"/>
</dbReference>
<comment type="function">
    <text evidence="1">Transfers and isomerizes the ribose moiety from AdoMet to the 7-aminomethyl group of 7-deazaguanine (preQ1-tRNA) to give epoxyqueuosine (oQ-tRNA).</text>
</comment>
<comment type="catalytic activity">
    <reaction evidence="1">
        <text>7-aminomethyl-7-carbaguanosine(34) in tRNA + S-adenosyl-L-methionine = epoxyqueuosine(34) in tRNA + adenine + L-methionine + 2 H(+)</text>
        <dbReference type="Rhea" id="RHEA:32155"/>
        <dbReference type="Rhea" id="RHEA-COMP:10342"/>
        <dbReference type="Rhea" id="RHEA-COMP:18582"/>
        <dbReference type="ChEBI" id="CHEBI:15378"/>
        <dbReference type="ChEBI" id="CHEBI:16708"/>
        <dbReference type="ChEBI" id="CHEBI:57844"/>
        <dbReference type="ChEBI" id="CHEBI:59789"/>
        <dbReference type="ChEBI" id="CHEBI:82833"/>
        <dbReference type="ChEBI" id="CHEBI:194443"/>
        <dbReference type="EC" id="2.4.99.17"/>
    </reaction>
</comment>
<comment type="pathway">
    <text evidence="1">tRNA modification; tRNA-queuosine biosynthesis.</text>
</comment>
<comment type="subunit">
    <text evidence="1">Monomer.</text>
</comment>
<comment type="subcellular location">
    <subcellularLocation>
        <location evidence="1">Cytoplasm</location>
    </subcellularLocation>
</comment>
<comment type="similarity">
    <text evidence="1">Belongs to the QueA family.</text>
</comment>
<organism>
    <name type="scientific">Vibrio parahaemolyticus serotype O3:K6 (strain RIMD 2210633)</name>
    <dbReference type="NCBI Taxonomy" id="223926"/>
    <lineage>
        <taxon>Bacteria</taxon>
        <taxon>Pseudomonadati</taxon>
        <taxon>Pseudomonadota</taxon>
        <taxon>Gammaproteobacteria</taxon>
        <taxon>Vibrionales</taxon>
        <taxon>Vibrionaceae</taxon>
        <taxon>Vibrio</taxon>
    </lineage>
</organism>
<evidence type="ECO:0000255" key="1">
    <source>
        <dbReference type="HAMAP-Rule" id="MF_00113"/>
    </source>
</evidence>